<proteinExistence type="evidence at protein level"/>
<accession>Q9M7I2</accession>
<dbReference type="EMBL" id="AF134835">
    <property type="protein sequence ID" value="AAF37386.1"/>
    <property type="molecule type" value="Genomic_DNA"/>
</dbReference>
<dbReference type="EMBL" id="CM001220">
    <property type="protein sequence ID" value="KEH31689.1"/>
    <property type="molecule type" value="Genomic_DNA"/>
</dbReference>
<dbReference type="EMBL" id="PSQE01000004">
    <property type="protein sequence ID" value="RHN63330.1"/>
    <property type="molecule type" value="Genomic_DNA"/>
</dbReference>
<dbReference type="RefSeq" id="XP_013457658.1">
    <property type="nucleotide sequence ID" value="XM_013602204.1"/>
</dbReference>
<dbReference type="SMR" id="Q9M7I2"/>
<dbReference type="STRING" id="3880.Q9M7I2"/>
<dbReference type="iPTMnet" id="Q9M7I2"/>
<dbReference type="EnsemblPlants" id="rna26017">
    <property type="protein sequence ID" value="RHN63330.1"/>
    <property type="gene ID" value="gene26017"/>
</dbReference>
<dbReference type="GeneID" id="25493638"/>
<dbReference type="Gramene" id="rna26017">
    <property type="protein sequence ID" value="RHN63330.1"/>
    <property type="gene ID" value="gene26017"/>
</dbReference>
<dbReference type="KEGG" id="mtr:25493638"/>
<dbReference type="HOGENOM" id="CLU_014831_4_2_1"/>
<dbReference type="OrthoDB" id="10263272at2759"/>
<dbReference type="UniPathway" id="UPA00143"/>
<dbReference type="Proteomes" id="UP000002051">
    <property type="component" value="Chromosome 4"/>
</dbReference>
<dbReference type="Proteomes" id="UP000265566">
    <property type="component" value="Chromosome 4"/>
</dbReference>
<dbReference type="GO" id="GO:0005680">
    <property type="term" value="C:anaphase-promoting complex"/>
    <property type="evidence" value="ECO:0000318"/>
    <property type="project" value="GO_Central"/>
</dbReference>
<dbReference type="GO" id="GO:0010997">
    <property type="term" value="F:anaphase-promoting complex binding"/>
    <property type="evidence" value="ECO:0000318"/>
    <property type="project" value="GO_Central"/>
</dbReference>
<dbReference type="GO" id="GO:1990757">
    <property type="term" value="F:ubiquitin ligase activator activity"/>
    <property type="evidence" value="ECO:0000318"/>
    <property type="project" value="GO_Central"/>
</dbReference>
<dbReference type="GO" id="GO:0031145">
    <property type="term" value="P:anaphase-promoting complex-dependent catabolic process"/>
    <property type="evidence" value="ECO:0000318"/>
    <property type="project" value="GO_Central"/>
</dbReference>
<dbReference type="GO" id="GO:0030154">
    <property type="term" value="P:cell differentiation"/>
    <property type="evidence" value="ECO:0007669"/>
    <property type="project" value="UniProtKB-KW"/>
</dbReference>
<dbReference type="GO" id="GO:0051301">
    <property type="term" value="P:cell division"/>
    <property type="evidence" value="ECO:0007669"/>
    <property type="project" value="UniProtKB-KW"/>
</dbReference>
<dbReference type="GO" id="GO:0009877">
    <property type="term" value="P:nodulation"/>
    <property type="evidence" value="ECO:0007669"/>
    <property type="project" value="UniProtKB-KW"/>
</dbReference>
<dbReference type="GO" id="GO:1905786">
    <property type="term" value="P:positive regulation of anaphase-promoting complex-dependent catabolic process"/>
    <property type="evidence" value="ECO:0000318"/>
    <property type="project" value="GO_Central"/>
</dbReference>
<dbReference type="GO" id="GO:0016567">
    <property type="term" value="P:protein ubiquitination"/>
    <property type="evidence" value="ECO:0007669"/>
    <property type="project" value="UniProtKB-UniPathway"/>
</dbReference>
<dbReference type="GO" id="GO:0009624">
    <property type="term" value="P:response to nematode"/>
    <property type="evidence" value="ECO:0000315"/>
    <property type="project" value="UniProtKB"/>
</dbReference>
<dbReference type="FunFam" id="2.130.10.10:FF:000025">
    <property type="entry name" value="FIZZY-related 2 isoform 1"/>
    <property type="match status" value="1"/>
</dbReference>
<dbReference type="Gene3D" id="2.130.10.10">
    <property type="entry name" value="YVTN repeat-like/Quinoprotein amine dehydrogenase"/>
    <property type="match status" value="1"/>
</dbReference>
<dbReference type="InterPro" id="IPR033010">
    <property type="entry name" value="Cdc20/Fizzy"/>
</dbReference>
<dbReference type="InterPro" id="IPR015943">
    <property type="entry name" value="WD40/YVTN_repeat-like_dom_sf"/>
</dbReference>
<dbReference type="InterPro" id="IPR056150">
    <property type="entry name" value="WD40_CDC20-Fz"/>
</dbReference>
<dbReference type="InterPro" id="IPR019775">
    <property type="entry name" value="WD40_repeat_CS"/>
</dbReference>
<dbReference type="InterPro" id="IPR036322">
    <property type="entry name" value="WD40_repeat_dom_sf"/>
</dbReference>
<dbReference type="InterPro" id="IPR001680">
    <property type="entry name" value="WD40_rpt"/>
</dbReference>
<dbReference type="PANTHER" id="PTHR19918">
    <property type="entry name" value="CELL DIVISION CYCLE 20 CDC20 FIZZY -RELATED"/>
    <property type="match status" value="1"/>
</dbReference>
<dbReference type="PANTHER" id="PTHR19918:SF1">
    <property type="entry name" value="FIZZY-RELATED PROTEIN HOMOLOG"/>
    <property type="match status" value="1"/>
</dbReference>
<dbReference type="Pfam" id="PF24807">
    <property type="entry name" value="WD40_CDC20-Fz"/>
    <property type="match status" value="1"/>
</dbReference>
<dbReference type="SMART" id="SM00320">
    <property type="entry name" value="WD40"/>
    <property type="match status" value="6"/>
</dbReference>
<dbReference type="SUPFAM" id="SSF50978">
    <property type="entry name" value="WD40 repeat-like"/>
    <property type="match status" value="1"/>
</dbReference>
<dbReference type="PROSITE" id="PS00678">
    <property type="entry name" value="WD_REPEATS_1"/>
    <property type="match status" value="2"/>
</dbReference>
<dbReference type="PROSITE" id="PS50082">
    <property type="entry name" value="WD_REPEATS_2"/>
    <property type="match status" value="3"/>
</dbReference>
<dbReference type="PROSITE" id="PS50294">
    <property type="entry name" value="WD_REPEATS_REGION"/>
    <property type="match status" value="1"/>
</dbReference>
<gene>
    <name evidence="9" type="primary">CCS52A</name>
    <name evidence="8" type="synonym">CCS52</name>
    <name evidence="10" type="ordered locus">MTR_4g102510</name>
    <name evidence="11" type="ordered locus">MtrunA17_Chr4g0057131</name>
</gene>
<sequence length="475" mass="52457">MDGTGNRNPPPTSTVGDNSPPPEPSPESLRHVSRMINSNHYTSPSRTIYSDRFIPSRSASKFALFDINTPTEGRDDSSSAYTTLLRTALFGPDVAGPVTPEKTDSPSMTLPNRNIFRYKTETRQSMHSLSPFMDDDFVPGINHSPVKAPRKVPRSPYKVLDAPALQDDFYLNLVDWSSHNVLAVGLGNCVYLWNACSSKVTKLCDLGVDDCVCSVGWAQRGTHLAVGTNNGKVQIWDAARCKKIRSMEGHRLRVGALAWSSSLLSSGGRDKNIYQRDIRTQEDFVSKLSGHKSEVCGLKWSYDNRELASGGNDNKLFVWNQHSTQPVLKYCEHTAAVKAIAWSPHLHGLLASGGGTADRCIRFWNTTTNSHLSCMDTGSQVCNLVWSKNVNELVSTHGYSQNQIIVWRYPTMSKLATLTGHTYRVLYLAISPDGQTIVTGAGDETLRFWNVFPSPKSQNTESEIGALSLGRTTIR</sequence>
<evidence type="ECO:0000250" key="1">
    <source>
        <dbReference type="UniProtKB" id="Q54KM3"/>
    </source>
</evidence>
<evidence type="ECO:0000255" key="2"/>
<evidence type="ECO:0000256" key="3">
    <source>
        <dbReference type="SAM" id="MobiDB-lite"/>
    </source>
</evidence>
<evidence type="ECO:0000269" key="4">
    <source>
    </source>
</evidence>
<evidence type="ECO:0000269" key="5">
    <source>
    </source>
</evidence>
<evidence type="ECO:0000269" key="6">
    <source>
    </source>
</evidence>
<evidence type="ECO:0000269" key="7">
    <source>
    </source>
</evidence>
<evidence type="ECO:0000303" key="8">
    <source>
    </source>
</evidence>
<evidence type="ECO:0000303" key="9">
    <source>
    </source>
</evidence>
<evidence type="ECO:0000312" key="10">
    <source>
        <dbReference type="EMBL" id="KEH31689.1"/>
    </source>
</evidence>
<evidence type="ECO:0000312" key="11">
    <source>
        <dbReference type="EMBL" id="RHN63330.1"/>
    </source>
</evidence>
<organism>
    <name type="scientific">Medicago truncatula</name>
    <name type="common">Barrel medic</name>
    <name type="synonym">Medicago tribuloides</name>
    <dbReference type="NCBI Taxonomy" id="3880"/>
    <lineage>
        <taxon>Eukaryota</taxon>
        <taxon>Viridiplantae</taxon>
        <taxon>Streptophyta</taxon>
        <taxon>Embryophyta</taxon>
        <taxon>Tracheophyta</taxon>
        <taxon>Spermatophyta</taxon>
        <taxon>Magnoliopsida</taxon>
        <taxon>eudicotyledons</taxon>
        <taxon>Gunneridae</taxon>
        <taxon>Pentapetalae</taxon>
        <taxon>rosids</taxon>
        <taxon>fabids</taxon>
        <taxon>Fabales</taxon>
        <taxon>Fabaceae</taxon>
        <taxon>Papilionoideae</taxon>
        <taxon>50 kb inversion clade</taxon>
        <taxon>NPAAA clade</taxon>
        <taxon>Hologalegina</taxon>
        <taxon>IRL clade</taxon>
        <taxon>Trifolieae</taxon>
        <taxon>Medicago</taxon>
    </lineage>
</organism>
<name>CS52A_MEDTR</name>
<feature type="chain" id="PRO_0000457862" description="B-type cell cycle switch protein ccs52A">
    <location>
        <begin position="1"/>
        <end position="475"/>
    </location>
</feature>
<feature type="repeat" description="WD 1" evidence="2">
    <location>
        <begin position="166"/>
        <end position="203"/>
    </location>
</feature>
<feature type="repeat" description="WD 2" evidence="2">
    <location>
        <begin position="207"/>
        <end position="246"/>
    </location>
</feature>
<feature type="repeat" description="WD 3" evidence="2">
    <location>
        <begin position="249"/>
        <end position="289"/>
    </location>
</feature>
<feature type="repeat" description="WD 4" evidence="2">
    <location>
        <begin position="290"/>
        <end position="329"/>
    </location>
</feature>
<feature type="repeat" description="WD 5" evidence="2">
    <location>
        <begin position="332"/>
        <end position="374"/>
    </location>
</feature>
<feature type="repeat" description="WD 6" evidence="2">
    <location>
        <begin position="376"/>
        <end position="417"/>
    </location>
</feature>
<feature type="repeat" description="WD 7" evidence="2">
    <location>
        <begin position="420"/>
        <end position="459"/>
    </location>
</feature>
<feature type="region of interest" description="Disordered" evidence="3">
    <location>
        <begin position="1"/>
        <end position="29"/>
    </location>
</feature>
<feature type="short sequence motif" description="PEST motif" evidence="9">
    <location>
        <begin position="7"/>
        <end position="28"/>
    </location>
</feature>
<feature type="short sequence motif" description="C-box" evidence="9">
    <location>
        <begin position="51"/>
        <end position="57"/>
    </location>
</feature>
<feature type="short sequence motif" description="CSM motif" evidence="9">
    <location>
        <begin position="80"/>
        <end position="91"/>
    </location>
</feature>
<feature type="modified residue" description="Phosphoserine" evidence="9">
    <location>
        <position position="43"/>
    </location>
</feature>
<feature type="modified residue" description="Phosphoserine" evidence="9">
    <location>
        <position position="45"/>
    </location>
</feature>
<feature type="modified residue" description="Phosphothreonine" evidence="9">
    <location>
        <position position="99"/>
    </location>
</feature>
<feature type="modified residue" description="Phosphoserine" evidence="9">
    <location>
        <position position="144"/>
    </location>
</feature>
<feature type="modified residue" description="Phosphoserine" evidence="9">
    <location>
        <position position="155"/>
    </location>
</feature>
<feature type="modified residue" description="Phosphoserine" evidence="9">
    <location>
        <position position="454"/>
    </location>
</feature>
<feature type="mutagenesis site" description="Increased activity and binding to the anaphase promoting complex/cyclosome (APC/C); when associated with A-45; A-99; A-144; A-155 and A-454." evidence="7">
    <original>S</original>
    <variation>A</variation>
    <location>
        <position position="43"/>
    </location>
</feature>
<feature type="mutagenesis site" description="Mimicking phosphorylation and leading to reduced activity; when associated with E-45. Strongly reduced activity; when associated with E-45; E-99; E-144; E-155 and E-454." evidence="7">
    <original>S</original>
    <variation>E</variation>
    <location>
        <position position="43"/>
    </location>
</feature>
<feature type="mutagenesis site" description="Increased activity and binding to the anaphase promoting complex/cyclosome (APC/C); when associated with A-43; A-99; A-144; A-155 and A-454." evidence="7">
    <original>S</original>
    <variation>A</variation>
    <location>
        <position position="45"/>
    </location>
</feature>
<feature type="mutagenesis site" description="Mimicking phosphorylation and leading to reduced activity; when associated with E-43. Strongly reduced activity; when associated with E-43; E-99; E-144; E-155 and E-454." evidence="7">
    <original>S</original>
    <variation>E</variation>
    <location>
        <position position="45"/>
    </location>
</feature>
<feature type="mutagenesis site" description="Increased activity and binding to the anaphase promoting complex/cyclosome (APC/C); when associated with A-43; A-45; A-144; A-155 and A-454." evidence="7">
    <original>T</original>
    <variation>A</variation>
    <location>
        <position position="99"/>
    </location>
</feature>
<feature type="mutagenesis site" description="Mimicking phosphorylation and leading to reduced activity; when associated with E-43; E-45; E-144; E-155 and E-454." evidence="7">
    <original>T</original>
    <variation>E</variation>
    <location>
        <position position="99"/>
    </location>
</feature>
<feature type="mutagenesis site" description="Increased activity and binding to the anaphase promoting complex/cyclosome (APC/C); when associated with A-43; A-45; A-99; A-155 and A-454." evidence="7">
    <original>S</original>
    <variation>A</variation>
    <location>
        <position position="144"/>
    </location>
</feature>
<feature type="mutagenesis site" description="Mimicking phosphorylation and leading to reduced activity; when associated with E-43; E-45; E-99; E-155 and E-454." evidence="7">
    <original>S</original>
    <variation>E</variation>
    <location>
        <position position="144"/>
    </location>
</feature>
<feature type="mutagenesis site" description="Increased activity and binding to the anaphase promoting complex/cyclosome (APC/C); when associated with A-43; A-45; A-99; A-144 and A-454." evidence="7">
    <original>S</original>
    <variation>A</variation>
    <location>
        <position position="155"/>
    </location>
</feature>
<feature type="mutagenesis site" description="Mimicking phosphorylation and leading to reduced activity; when associated with E-43; E-45; E-99; E-144 and E-454." evidence="7">
    <original>S</original>
    <variation>E</variation>
    <location>
        <position position="155"/>
    </location>
</feature>
<feature type="mutagenesis site" description="Increased activity and binding to the anaphase promoting complex/cyclosome (APC/C); when associated with A-43; A-45; A-99; A-144 and A-155." evidence="7">
    <original>S</original>
    <variation>A</variation>
    <location>
        <position position="454"/>
    </location>
</feature>
<feature type="mutagenesis site" description="Mimicking phosphorylation and leading to reduced activity; when associated with E-43; E-45; E-99; E-144 and E-155." evidence="7">
    <original>S</original>
    <variation>E</variation>
    <location>
        <position position="454"/>
    </location>
</feature>
<reference key="1">
    <citation type="journal article" date="1999" name="EMBO J.">
        <title>The mitotic inhibitor ccs52 is required for endoreduplication and ploidy-dependent cell enlargement in plants.</title>
        <authorList>
            <person name="Cebolla A."/>
            <person name="Vinardell J.M."/>
            <person name="Kiss E."/>
            <person name="Olah B."/>
            <person name="Roudier F."/>
            <person name="Kondorosi A."/>
            <person name="Kondorosi E."/>
        </authorList>
    </citation>
    <scope>NUCLEOTIDE SEQUENCE [GENOMIC DNA]</scope>
    <scope>FUNCTION</scope>
    <scope>DISRUPTION PHENOTYPE</scope>
    <scope>TISSUE SPECIFICITY</scope>
    <scope>DEVELOPMENTAL STAGE</scope>
    <source>
        <strain>cv. Ghor</strain>
        <tissue>Root nodule</tissue>
    </source>
</reference>
<reference key="2">
    <citation type="journal article" date="2011" name="Nature">
        <title>The Medicago genome provides insight into the evolution of rhizobial symbioses.</title>
        <authorList>
            <person name="Young N.D."/>
            <person name="Debelle F."/>
            <person name="Oldroyd G.E.D."/>
            <person name="Geurts R."/>
            <person name="Cannon S.B."/>
            <person name="Udvardi M.K."/>
            <person name="Benedito V.A."/>
            <person name="Mayer K.F.X."/>
            <person name="Gouzy J."/>
            <person name="Schoof H."/>
            <person name="Van de Peer Y."/>
            <person name="Proost S."/>
            <person name="Cook D.R."/>
            <person name="Meyers B.C."/>
            <person name="Spannagl M."/>
            <person name="Cheung F."/>
            <person name="De Mita S."/>
            <person name="Krishnakumar V."/>
            <person name="Gundlach H."/>
            <person name="Zhou S."/>
            <person name="Mudge J."/>
            <person name="Bharti A.K."/>
            <person name="Murray J.D."/>
            <person name="Naoumkina M.A."/>
            <person name="Rosen B."/>
            <person name="Silverstein K.A.T."/>
            <person name="Tang H."/>
            <person name="Rombauts S."/>
            <person name="Zhao P.X."/>
            <person name="Zhou P."/>
            <person name="Barbe V."/>
            <person name="Bardou P."/>
            <person name="Bechner M."/>
            <person name="Bellec A."/>
            <person name="Berger A."/>
            <person name="Berges H."/>
            <person name="Bidwell S."/>
            <person name="Bisseling T."/>
            <person name="Choisne N."/>
            <person name="Couloux A."/>
            <person name="Denny R."/>
            <person name="Deshpande S."/>
            <person name="Dai X."/>
            <person name="Doyle J.J."/>
            <person name="Dudez A.-M."/>
            <person name="Farmer A.D."/>
            <person name="Fouteau S."/>
            <person name="Franken C."/>
            <person name="Gibelin C."/>
            <person name="Gish J."/>
            <person name="Goldstein S."/>
            <person name="Gonzalez A.J."/>
            <person name="Green P.J."/>
            <person name="Hallab A."/>
            <person name="Hartog M."/>
            <person name="Hua A."/>
            <person name="Humphray S.J."/>
            <person name="Jeong D.-H."/>
            <person name="Jing Y."/>
            <person name="Jocker A."/>
            <person name="Kenton S.M."/>
            <person name="Kim D.-J."/>
            <person name="Klee K."/>
            <person name="Lai H."/>
            <person name="Lang C."/>
            <person name="Lin S."/>
            <person name="Macmil S.L."/>
            <person name="Magdelenat G."/>
            <person name="Matthews L."/>
            <person name="McCorrison J."/>
            <person name="Monaghan E.L."/>
            <person name="Mun J.-H."/>
            <person name="Najar F.Z."/>
            <person name="Nicholson C."/>
            <person name="Noirot C."/>
            <person name="O'Bleness M."/>
            <person name="Paule C.R."/>
            <person name="Poulain J."/>
            <person name="Prion F."/>
            <person name="Qin B."/>
            <person name="Qu C."/>
            <person name="Retzel E.F."/>
            <person name="Riddle C."/>
            <person name="Sallet E."/>
            <person name="Samain S."/>
            <person name="Samson N."/>
            <person name="Sanders I."/>
            <person name="Saurat O."/>
            <person name="Scarpelli C."/>
            <person name="Schiex T."/>
            <person name="Segurens B."/>
            <person name="Severin A.J."/>
            <person name="Sherrier D.J."/>
            <person name="Shi R."/>
            <person name="Sims S."/>
            <person name="Singer S.R."/>
            <person name="Sinharoy S."/>
            <person name="Sterck L."/>
            <person name="Viollet A."/>
            <person name="Wang B.-B."/>
            <person name="Wang K."/>
            <person name="Wang M."/>
            <person name="Wang X."/>
            <person name="Warfsmann J."/>
            <person name="Weissenbach J."/>
            <person name="White D.D."/>
            <person name="White J.D."/>
            <person name="Wiley G.B."/>
            <person name="Wincker P."/>
            <person name="Xing Y."/>
            <person name="Yang L."/>
            <person name="Yao Z."/>
            <person name="Ying F."/>
            <person name="Zhai J."/>
            <person name="Zhou L."/>
            <person name="Zuber A."/>
            <person name="Denarie J."/>
            <person name="Dixon R.A."/>
            <person name="May G.D."/>
            <person name="Schwartz D.C."/>
            <person name="Rogers J."/>
            <person name="Quetier F."/>
            <person name="Town C.D."/>
            <person name="Roe B.A."/>
        </authorList>
    </citation>
    <scope>NUCLEOTIDE SEQUENCE [LARGE SCALE GENOMIC DNA]</scope>
    <source>
        <strain>cv. Jemalong A17</strain>
    </source>
</reference>
<reference key="3">
    <citation type="journal article" date="2014" name="BMC Genomics">
        <title>An improved genome release (version Mt4.0) for the model legume Medicago truncatula.</title>
        <authorList>
            <person name="Tang H."/>
            <person name="Krishnakumar V."/>
            <person name="Bidwell S."/>
            <person name="Rosen B."/>
            <person name="Chan A."/>
            <person name="Zhou S."/>
            <person name="Gentzbittel L."/>
            <person name="Childs K.L."/>
            <person name="Yandell M."/>
            <person name="Gundlach H."/>
            <person name="Mayer K.F."/>
            <person name="Schwartz D.C."/>
            <person name="Town C.D."/>
        </authorList>
    </citation>
    <scope>GENOME REANNOTATION</scope>
    <source>
        <strain>cv. Jemalong A17</strain>
    </source>
</reference>
<reference key="4">
    <citation type="journal article" date="2018" name="Nat. Plants">
        <title>Whole-genome landscape of Medicago truncatula symbiotic genes.</title>
        <authorList>
            <person name="Pecrix Y."/>
            <person name="Staton S.E."/>
            <person name="Sallet E."/>
            <person name="Lelandais-Briere C."/>
            <person name="Moreau S."/>
            <person name="Carrere S."/>
            <person name="Blein T."/>
            <person name="Jardinaud M.F."/>
            <person name="Latrasse D."/>
            <person name="Zouine M."/>
            <person name="Zahm M."/>
            <person name="Kreplak J."/>
            <person name="Mayjonade B."/>
            <person name="Satge C."/>
            <person name="Perez M."/>
            <person name="Cauet S."/>
            <person name="Marande W."/>
            <person name="Chantry-Darmon C."/>
            <person name="Lopez-Roques C."/>
            <person name="Bouchez O."/>
            <person name="Berard A."/>
            <person name="Debelle F."/>
            <person name="Munos S."/>
            <person name="Bendahmane A."/>
            <person name="Berges H."/>
            <person name="Niebel A."/>
            <person name="Buitink J."/>
            <person name="Frugier F."/>
            <person name="Benhamed M."/>
            <person name="Crespi M."/>
            <person name="Gouzy J."/>
            <person name="Gamas P."/>
        </authorList>
    </citation>
    <scope>NUCLEOTIDE SEQUENCE [LARGE SCALE GENOMIC DNA]</scope>
    <source>
        <strain>cv. Jemalong A17</strain>
        <tissue>Leaf</tissue>
    </source>
</reference>
<reference key="5">
    <citation type="journal article" date="2002" name="Mol. Plant Microbe Interact.">
        <title>The endosymbiosis-induced genes ENOD40 and CCS52a are involved in endoparasitic-nematode interactions in Medicago truncatula.</title>
        <authorList>
            <person name="Favery B."/>
            <person name="Complainville A."/>
            <person name="Vinardell J.M."/>
            <person name="Lecomte P."/>
            <person name="Vaubert D."/>
            <person name="Mergaert P."/>
            <person name="Kondorosi A."/>
            <person name="Kondorosi E."/>
            <person name="Crespi M."/>
            <person name="Abad P."/>
        </authorList>
    </citation>
    <scope>FUNCTION</scope>
    <scope>INDUCTION BY MELOIDOGYNE INCOGNITA</scope>
    <scope>DEVELOPMENTAL STAGE</scope>
</reference>
<reference key="6">
    <citation type="journal article" date="2003" name="Plant Cell">
        <title>Endoreduplication mediated by the anaphase-promoting complex activator CCS52A is required for symbiotic cell differentiation in Medicago truncatula nodules.</title>
        <authorList>
            <person name="Vinardell J.M."/>
            <person name="Fedorova E."/>
            <person name="Cebolla A."/>
            <person name="Kevei Z."/>
            <person name="Horvath G."/>
            <person name="Kelemen Z."/>
            <person name="Tarayre S."/>
            <person name="Roudier F."/>
            <person name="Mergaert P."/>
            <person name="Kondorosi A."/>
            <person name="Kondorosi E."/>
        </authorList>
    </citation>
    <scope>FUNCTION</scope>
    <scope>DISRUPTION PHENOTYPE</scope>
    <scope>SUBCELLULAR LOCATION</scope>
    <scope>DEVELOPMENTAL STAGE</scope>
    <scope>TISSUE SPECIFICITY</scope>
    <source>
        <strain>cv. Ghor</strain>
    </source>
</reference>
<reference key="7">
    <citation type="journal article" date="2004" name="Plant Cell">
        <title>Two classes of the CDh1-type activators of the anaphase-promoting complex in plants: novel functional domains and distinct regulation.</title>
        <authorList>
            <person name="Tarayre S."/>
            <person name="Vinardell J.M."/>
            <person name="Cebolla A."/>
            <person name="Kondorosi A."/>
            <person name="Kondorosi E."/>
        </authorList>
    </citation>
    <scope>FUNCTION</scope>
    <scope>MUTAGENESIS OF SER-43; SER-45; THR-99; SER-144; SER-155 AND SER-454</scope>
    <scope>INDUCTION</scope>
    <scope>TISSUE SPECIFICITY</scope>
    <scope>DEVELOPMENTAL STAGE</scope>
    <scope>DOMAIN</scope>
    <scope>PHOSPHORYLATION AT SER-43; SER-45; THR-99; SER-144; SER-155 AND SER-454</scope>
    <scope>GENE FAMILY</scope>
    <scope>NOMENCLATURE</scope>
    <source>
        <tissue>Root nodule</tissue>
    </source>
</reference>
<reference key="8">
    <citation type="journal article" date="2015" name="Int. Rev. Cell Mol. Biol.">
        <title>Leguminous plants: inventors of root nodules to accommodate symbiotic bacteria.</title>
        <authorList>
            <person name="Suzaki T."/>
            <person name="Yoro E."/>
            <person name="Kawaguchi M."/>
        </authorList>
    </citation>
    <scope>REVIEW ON NODULATION</scope>
</reference>
<reference key="9">
    <citation type="journal article" date="2020" name="Plant Cell">
        <title>Celebrating 20 years of genetic discoveries in legume nodulation and symbiotic nitrogen fixation.</title>
        <authorList>
            <person name="Roy S."/>
            <person name="Liu W."/>
            <person name="Nandety R.S."/>
            <person name="Crook A."/>
            <person name="Mysore K.S."/>
            <person name="Pislariu C.I."/>
            <person name="Frugoli J."/>
            <person name="Dickstein R."/>
            <person name="Udvardi M.K."/>
        </authorList>
    </citation>
    <scope>REVIEW ON NODULATION</scope>
</reference>
<keyword id="KW-0131">Cell cycle</keyword>
<keyword id="KW-0132">Cell division</keyword>
<keyword id="KW-0221">Differentiation</keyword>
<keyword id="KW-0498">Mitosis</keyword>
<keyword id="KW-0536">Nodulation</keyword>
<keyword id="KW-0539">Nucleus</keyword>
<keyword id="KW-0597">Phosphoprotein</keyword>
<keyword id="KW-1185">Reference proteome</keyword>
<keyword id="KW-0677">Repeat</keyword>
<keyword id="KW-0853">WD repeat</keyword>
<comment type="function">
    <text evidence="4 5 6 7">Component of the anaphase promoting complex/cyclosome (APC/C), a cell cycle-regulated E3 ubiquitin-protein ligase complex that controls progression through mitosis and the G1 phase of the cell cycle (PubMed:14742878). Required to switch form cell proliferation to cell differentiation, endoreduplication and ploidy-dependent cell enlargement, including during nodulation, before nodule differentiation (PubMed:10449413, PubMed:12953113). Involved in root-knot nematode Meloidogyne incognita giant cells formation (PubMed:12437298).</text>
</comment>
<comment type="pathway">
    <text evidence="1">Protein modification; protein ubiquitination.</text>
</comment>
<comment type="subcellular location">
    <subcellularLocation>
        <location evidence="6">Nucleus</location>
    </subcellularLocation>
    <text evidence="6">Present in the nucleus of endoreduplication-competent cells.</text>
</comment>
<comment type="tissue specificity">
    <text evidence="4 6 7">Mostly expressed in nodules, and, to a lower extent, in root tips, stems, hypocotyls, leaves, flower buds and flowers.</text>
</comment>
<comment type="developmental stage">
    <text evidence="4 5 6 7">In embryos, present in the radicle and in the cotyledons (PubMed:14742878). In growing seedlings, remains present in cotyledons but become restricted to apices in roots (PubMed:14742878). Fades out later in cotyledons but appears at the initiation site of emerging leaves in the shoot apex (PubMed:14742878). Accumulates transiently in leaf limbs and petioles (PubMed:14742878). During root development, expressed in the root apical meristem (root tips) and at lateral root initiation sites (PubMed:10449413, PubMed:12437298, PubMed:14742878). In flowers, observed in anthers, manly in pollen grains, and slightly in sepals (PubMed:14742878). After pollination, accumulates in immature seeds (PubMed:14742878). In seedpods, mainly present in vascular bundles (PubMed:14742878). In nodules, accumulates mainly in the prefixation zone (zone II), where cell division is arrested and cell differentiation and endoreplication occur, as well as infection by symbiotic rhizobia (e.g. bacteroids formation) (PubMed:10449413, PubMed:12953113). After infection with the root-knot nematode Meloidogyne incognita, expressed in giant cells undergoing endoreduplication (PubMed:12437298).</text>
</comment>
<comment type="induction">
    <text evidence="5 7">Present in all phases of the cell cycle (PubMed:14742878). Induced by the root-knot nematode Meloidogyne incognita at the nematode feeding sites (NFS), and accumulates in subsequent root galls (PubMed:12437298).</text>
</comment>
<comment type="domain">
    <text evidence="7">Both CSM and C-box motifs are required for binding to the anaphase promoting complex/cyclosome (APC/C).</text>
</comment>
<comment type="disruption phenotype">
    <text evidence="4 6">Decreased number of endocycles and lower volume of largest cells in petioles (PubMed:10449413). Impaired nodule development associated with a lower ploidy, reduced cell size, inefficient invasion by bacteroids and altered maturation of symbiotic cells, leading to an early senescence and the death of both the bacterium and host plant cells (PubMed:12953113).</text>
</comment>
<comment type="similarity">
    <text evidence="1">Belongs to the WD repeat CDC20/Fizzy family.</text>
</comment>
<protein>
    <recommendedName>
        <fullName evidence="9">B-type cell cycle switch protein ccs52A</fullName>
        <shortName evidence="9">MtCcs52A</shortName>
    </recommendedName>
</protein>